<reference key="1">
    <citation type="journal article" date="1997" name="DNA Res.">
        <title>Structural analysis of Arabidopsis thaliana chromosome 5. I. Sequence features of the 1.6 Mb regions covered by twenty physically assigned P1 clones.</title>
        <authorList>
            <person name="Sato S."/>
            <person name="Kotani H."/>
            <person name="Nakamura Y."/>
            <person name="Kaneko T."/>
            <person name="Asamizu E."/>
            <person name="Fukami M."/>
            <person name="Miyajima N."/>
            <person name="Tabata S."/>
        </authorList>
    </citation>
    <scope>NUCLEOTIDE SEQUENCE [LARGE SCALE GENOMIC DNA]</scope>
    <source>
        <strain>cv. Columbia</strain>
    </source>
</reference>
<reference key="2">
    <citation type="journal article" date="2017" name="Plant J.">
        <title>Araport11: a complete reannotation of the Arabidopsis thaliana reference genome.</title>
        <authorList>
            <person name="Cheng C.Y."/>
            <person name="Krishnakumar V."/>
            <person name="Chan A.P."/>
            <person name="Thibaud-Nissen F."/>
            <person name="Schobel S."/>
            <person name="Town C.D."/>
        </authorList>
    </citation>
    <scope>GENOME REANNOTATION</scope>
    <source>
        <strain>cv. Columbia</strain>
    </source>
</reference>
<reference key="3">
    <citation type="journal article" date="2006" name="Plant Biotechnol. J.">
        <title>Simultaneous high-throughput recombinational cloning of open reading frames in closed and open configurations.</title>
        <authorList>
            <person name="Underwood B.A."/>
            <person name="Vanderhaeghen R."/>
            <person name="Whitford R."/>
            <person name="Town C.D."/>
            <person name="Hilson P."/>
        </authorList>
    </citation>
    <scope>NUCLEOTIDE SEQUENCE [LARGE SCALE MRNA]</scope>
    <source>
        <strain>cv. Columbia</strain>
    </source>
</reference>
<reference key="4">
    <citation type="journal article" date="2007" name="Plant J.">
        <title>Small cysteine-rich peptides resembling antimicrobial peptides have been under-predicted in plants.</title>
        <authorList>
            <person name="Silverstein K.A.T."/>
            <person name="Moskal W.A. Jr."/>
            <person name="Wu H.C."/>
            <person name="Underwood B.A."/>
            <person name="Graham M.A."/>
            <person name="Town C.D."/>
            <person name="VandenBosch K.A."/>
        </authorList>
    </citation>
    <scope>NUCLEOTIDE SEQUENCE [LARGE SCALE MRNA]</scope>
    <source>
        <strain>cv. Columbia</strain>
    </source>
</reference>
<reference key="5">
    <citation type="journal article" date="2005" name="Plant Physiol.">
        <title>Genome organization of more than 300 defensin-like genes in Arabidopsis.</title>
        <authorList>
            <person name="Silverstein K.A.T."/>
            <person name="Graham M.A."/>
            <person name="Paape T.D."/>
            <person name="VandenBosch K.A."/>
        </authorList>
    </citation>
    <scope>GENE FAMILY</scope>
</reference>
<keyword id="KW-0929">Antimicrobial</keyword>
<keyword id="KW-1015">Disulfide bond</keyword>
<keyword id="KW-0295">Fungicide</keyword>
<keyword id="KW-0611">Plant defense</keyword>
<keyword id="KW-1185">Reference proteome</keyword>
<keyword id="KW-0964">Secreted</keyword>
<keyword id="KW-0732">Signal</keyword>
<comment type="subcellular location">
    <subcellularLocation>
        <location evidence="1">Secreted</location>
    </subcellularLocation>
</comment>
<comment type="similarity">
    <text evidence="3">Belongs to the DEFL family.</text>
</comment>
<gene>
    <name type="ordered locus">At5g16453</name>
    <name type="ORF">MQK4</name>
</gene>
<evidence type="ECO:0000250" key="1"/>
<evidence type="ECO:0000255" key="2"/>
<evidence type="ECO:0000305" key="3"/>
<protein>
    <recommendedName>
        <fullName>Defensin-like protein 24</fullName>
    </recommendedName>
</protein>
<accession>Q2V371</accession>
<organism>
    <name type="scientific">Arabidopsis thaliana</name>
    <name type="common">Mouse-ear cress</name>
    <dbReference type="NCBI Taxonomy" id="3702"/>
    <lineage>
        <taxon>Eukaryota</taxon>
        <taxon>Viridiplantae</taxon>
        <taxon>Streptophyta</taxon>
        <taxon>Embryophyta</taxon>
        <taxon>Tracheophyta</taxon>
        <taxon>Spermatophyta</taxon>
        <taxon>Magnoliopsida</taxon>
        <taxon>eudicotyledons</taxon>
        <taxon>Gunneridae</taxon>
        <taxon>Pentapetalae</taxon>
        <taxon>rosids</taxon>
        <taxon>malvids</taxon>
        <taxon>Brassicales</taxon>
        <taxon>Brassicaceae</taxon>
        <taxon>Camelineae</taxon>
        <taxon>Arabidopsis</taxon>
    </lineage>
</organism>
<name>DEF24_ARATH</name>
<proteinExistence type="inferred from homology"/>
<dbReference type="EMBL" id="AB005242">
    <property type="status" value="NOT_ANNOTATED_CDS"/>
    <property type="molecule type" value="Genomic_DNA"/>
</dbReference>
<dbReference type="EMBL" id="CP002688">
    <property type="protein sequence ID" value="AED92295.1"/>
    <property type="molecule type" value="Genomic_DNA"/>
</dbReference>
<dbReference type="EMBL" id="DQ912223">
    <property type="protein sequence ID" value="ABI34025.1"/>
    <property type="molecule type" value="mRNA"/>
</dbReference>
<dbReference type="EMBL" id="EF182823">
    <property type="status" value="NOT_ANNOTATED_CDS"/>
    <property type="molecule type" value="mRNA"/>
</dbReference>
<dbReference type="RefSeq" id="NP_001031891.1">
    <property type="nucleotide sequence ID" value="NM_001036814.3"/>
</dbReference>
<dbReference type="STRING" id="3702.Q2V371"/>
<dbReference type="PaxDb" id="3702-AT5G16453.1"/>
<dbReference type="ProteomicsDB" id="224562"/>
<dbReference type="EnsemblPlants" id="AT5G16453.1">
    <property type="protein sequence ID" value="AT5G16453.1"/>
    <property type="gene ID" value="AT5G16453"/>
</dbReference>
<dbReference type="GeneID" id="3770636"/>
<dbReference type="Gramene" id="AT5G16453.1">
    <property type="protein sequence ID" value="AT5G16453.1"/>
    <property type="gene ID" value="AT5G16453"/>
</dbReference>
<dbReference type="KEGG" id="ath:AT5G16453"/>
<dbReference type="Araport" id="AT5G16453"/>
<dbReference type="TAIR" id="AT5G16453"/>
<dbReference type="HOGENOM" id="CLU_185732_0_0_1"/>
<dbReference type="InParanoid" id="Q2V371"/>
<dbReference type="OMA" id="KGGGCQP"/>
<dbReference type="OrthoDB" id="1028959at2759"/>
<dbReference type="PhylomeDB" id="Q2V371"/>
<dbReference type="PRO" id="PR:Q2V371"/>
<dbReference type="Proteomes" id="UP000006548">
    <property type="component" value="Chromosome 5"/>
</dbReference>
<dbReference type="ExpressionAtlas" id="Q2V371">
    <property type="expression patterns" value="baseline and differential"/>
</dbReference>
<dbReference type="GO" id="GO:0005576">
    <property type="term" value="C:extracellular region"/>
    <property type="evidence" value="ECO:0007669"/>
    <property type="project" value="UniProtKB-SubCell"/>
</dbReference>
<dbReference type="GO" id="GO:0050832">
    <property type="term" value="P:defense response to fungus"/>
    <property type="evidence" value="ECO:0007669"/>
    <property type="project" value="UniProtKB-KW"/>
</dbReference>
<dbReference type="GO" id="GO:0031640">
    <property type="term" value="P:killing of cells of another organism"/>
    <property type="evidence" value="ECO:0007669"/>
    <property type="project" value="UniProtKB-KW"/>
</dbReference>
<dbReference type="InterPro" id="IPR022618">
    <property type="entry name" value="Defensin-like_20-28"/>
</dbReference>
<dbReference type="PANTHER" id="PTHR34453">
    <property type="entry name" value="DEFENSIN-LIKE (DEFL) FAMILY PROTEIN-RELATED"/>
    <property type="match status" value="1"/>
</dbReference>
<dbReference type="PANTHER" id="PTHR34453:SF8">
    <property type="entry name" value="DEFENSIN-LIKE PROTEIN 24"/>
    <property type="match status" value="1"/>
</dbReference>
<dbReference type="Pfam" id="PF10868">
    <property type="entry name" value="Defensin_like"/>
    <property type="match status" value="1"/>
</dbReference>
<feature type="signal peptide" evidence="2">
    <location>
        <begin position="1"/>
        <end position="23"/>
    </location>
</feature>
<feature type="chain" id="PRO_0000379606" description="Defensin-like protein 24">
    <location>
        <begin position="24"/>
        <end position="88"/>
    </location>
</feature>
<feature type="disulfide bond" evidence="1">
    <location>
        <begin position="37"/>
        <end position="87"/>
    </location>
</feature>
<feature type="disulfide bond" evidence="1">
    <location>
        <begin position="47"/>
        <end position="72"/>
    </location>
</feature>
<feature type="disulfide bond" evidence="1">
    <location>
        <begin position="56"/>
        <end position="83"/>
    </location>
</feature>
<feature type="disulfide bond" evidence="1">
    <location>
        <begin position="60"/>
        <end position="85"/>
    </location>
</feature>
<sequence length="88" mass="9300">MASSKFVLFAILALSLLLSGTEARKTVWPSSELDPKCCSNQPEFGICDSKEDDERCAQMCLDGCPTNKGGGCQPITEAPGAVCSCYCA</sequence>